<feature type="chain" id="PRO_0000135814" description="Histidinol dehydrogenase">
    <location>
        <begin position="1"/>
        <end position="442"/>
    </location>
</feature>
<feature type="active site" description="Proton acceptor" evidence="1">
    <location>
        <position position="340"/>
    </location>
</feature>
<feature type="active site" description="Proton acceptor" evidence="1">
    <location>
        <position position="341"/>
    </location>
</feature>
<feature type="binding site" evidence="1">
    <location>
        <position position="142"/>
    </location>
    <ligand>
        <name>NAD(+)</name>
        <dbReference type="ChEBI" id="CHEBI:57540"/>
    </ligand>
</feature>
<feature type="binding site" evidence="1">
    <location>
        <position position="204"/>
    </location>
    <ligand>
        <name>NAD(+)</name>
        <dbReference type="ChEBI" id="CHEBI:57540"/>
    </ligand>
</feature>
<feature type="binding site" evidence="1">
    <location>
        <position position="227"/>
    </location>
    <ligand>
        <name>NAD(+)</name>
        <dbReference type="ChEBI" id="CHEBI:57540"/>
    </ligand>
</feature>
<feature type="binding site" evidence="1">
    <location>
        <position position="250"/>
    </location>
    <ligand>
        <name>substrate</name>
    </ligand>
</feature>
<feature type="binding site" evidence="1">
    <location>
        <position position="272"/>
    </location>
    <ligand>
        <name>substrate</name>
    </ligand>
</feature>
<feature type="binding site" evidence="1">
    <location>
        <position position="272"/>
    </location>
    <ligand>
        <name>Zn(2+)</name>
        <dbReference type="ChEBI" id="CHEBI:29105"/>
    </ligand>
</feature>
<feature type="binding site" evidence="1">
    <location>
        <position position="275"/>
    </location>
    <ligand>
        <name>substrate</name>
    </ligand>
</feature>
<feature type="binding site" evidence="1">
    <location>
        <position position="275"/>
    </location>
    <ligand>
        <name>Zn(2+)</name>
        <dbReference type="ChEBI" id="CHEBI:29105"/>
    </ligand>
</feature>
<feature type="binding site" evidence="1">
    <location>
        <position position="341"/>
    </location>
    <ligand>
        <name>substrate</name>
    </ligand>
</feature>
<feature type="binding site" evidence="1">
    <location>
        <position position="374"/>
    </location>
    <ligand>
        <name>substrate</name>
    </ligand>
</feature>
<feature type="binding site" evidence="1">
    <location>
        <position position="374"/>
    </location>
    <ligand>
        <name>Zn(2+)</name>
        <dbReference type="ChEBI" id="CHEBI:29105"/>
    </ligand>
</feature>
<feature type="binding site" evidence="1">
    <location>
        <position position="428"/>
    </location>
    <ligand>
        <name>substrate</name>
    </ligand>
</feature>
<feature type="binding site" evidence="1">
    <location>
        <position position="433"/>
    </location>
    <ligand>
        <name>substrate</name>
    </ligand>
</feature>
<feature type="binding site" evidence="1">
    <location>
        <position position="433"/>
    </location>
    <ligand>
        <name>Zn(2+)</name>
        <dbReference type="ChEBI" id="CHEBI:29105"/>
    </ligand>
</feature>
<accession>Q7V5N9</accession>
<protein>
    <recommendedName>
        <fullName evidence="1">Histidinol dehydrogenase</fullName>
        <shortName evidence="1">HDH</shortName>
        <ecNumber evidence="1">1.1.1.23</ecNumber>
    </recommendedName>
</protein>
<organism>
    <name type="scientific">Prochlorococcus marinus (strain MIT 9313)</name>
    <dbReference type="NCBI Taxonomy" id="74547"/>
    <lineage>
        <taxon>Bacteria</taxon>
        <taxon>Bacillati</taxon>
        <taxon>Cyanobacteriota</taxon>
        <taxon>Cyanophyceae</taxon>
        <taxon>Synechococcales</taxon>
        <taxon>Prochlorococcaceae</taxon>
        <taxon>Prochlorococcus</taxon>
    </lineage>
</organism>
<keyword id="KW-0028">Amino-acid biosynthesis</keyword>
<keyword id="KW-0368">Histidine biosynthesis</keyword>
<keyword id="KW-0479">Metal-binding</keyword>
<keyword id="KW-0520">NAD</keyword>
<keyword id="KW-0560">Oxidoreductase</keyword>
<keyword id="KW-1185">Reference proteome</keyword>
<keyword id="KW-0862">Zinc</keyword>
<sequence length="442" mass="47869">MTQSGQAESETPSTLIHCVRDRQQAKRELERLANRSTGNSQKQAMATVEDILDTVRSQGDQALITLTERFDGFRPEPLTVAPEELEDAWRKTPQKLQSALELAYRRIQDFHQHQRPNDLMVQGIHGEQLGRRWRPVQKAGIYIPGGRAAYPSTVLMNAVPAQVAGVEQLVMTSPAGRDGQINRTVLAAAHLAGIREVLRLGGAQAIAALAFGTETVPKVDVISGPGNLYVTLAKKAVYGQVGIDSLAGPSEVLVIADQSARVEQVAADLLAQSEHDPLAAAVLLTTEASLAEQLPSHLEAQLKGHPREQICRASLSNWGLVVICESLERCAQLSDHFAPEHLELLVEHPHAIADCIKNAGAIFIGPWTPEAVGDYLAGPNHTLPTCGTARFSGALSVETFLRHTSLIEFNRSALEATANAVRELASSEGLHSHAESVRIRFE</sequence>
<reference key="1">
    <citation type="journal article" date="2003" name="Nature">
        <title>Genome divergence in two Prochlorococcus ecotypes reflects oceanic niche differentiation.</title>
        <authorList>
            <person name="Rocap G."/>
            <person name="Larimer F.W."/>
            <person name="Lamerdin J.E."/>
            <person name="Malfatti S."/>
            <person name="Chain P."/>
            <person name="Ahlgren N.A."/>
            <person name="Arellano A."/>
            <person name="Coleman M."/>
            <person name="Hauser L."/>
            <person name="Hess W.R."/>
            <person name="Johnson Z.I."/>
            <person name="Land M.L."/>
            <person name="Lindell D."/>
            <person name="Post A.F."/>
            <person name="Regala W."/>
            <person name="Shah M."/>
            <person name="Shaw S.L."/>
            <person name="Steglich C."/>
            <person name="Sullivan M.B."/>
            <person name="Ting C.S."/>
            <person name="Tolonen A."/>
            <person name="Webb E.A."/>
            <person name="Zinser E.R."/>
            <person name="Chisholm S.W."/>
        </authorList>
    </citation>
    <scope>NUCLEOTIDE SEQUENCE [LARGE SCALE GENOMIC DNA]</scope>
    <source>
        <strain>MIT 9313</strain>
    </source>
</reference>
<name>HISX_PROMM</name>
<gene>
    <name evidence="1" type="primary">hisD</name>
    <name type="ordered locus">PMT_1510</name>
</gene>
<comment type="function">
    <text evidence="1">Catalyzes the sequential NAD-dependent oxidations of L-histidinol to L-histidinaldehyde and then to L-histidine.</text>
</comment>
<comment type="catalytic activity">
    <reaction evidence="1">
        <text>L-histidinol + 2 NAD(+) + H2O = L-histidine + 2 NADH + 3 H(+)</text>
        <dbReference type="Rhea" id="RHEA:20641"/>
        <dbReference type="ChEBI" id="CHEBI:15377"/>
        <dbReference type="ChEBI" id="CHEBI:15378"/>
        <dbReference type="ChEBI" id="CHEBI:57540"/>
        <dbReference type="ChEBI" id="CHEBI:57595"/>
        <dbReference type="ChEBI" id="CHEBI:57699"/>
        <dbReference type="ChEBI" id="CHEBI:57945"/>
        <dbReference type="EC" id="1.1.1.23"/>
    </reaction>
</comment>
<comment type="cofactor">
    <cofactor evidence="1">
        <name>Zn(2+)</name>
        <dbReference type="ChEBI" id="CHEBI:29105"/>
    </cofactor>
    <text evidence="1">Binds 1 zinc ion per subunit.</text>
</comment>
<comment type="pathway">
    <text evidence="1">Amino-acid biosynthesis; L-histidine biosynthesis; L-histidine from 5-phospho-alpha-D-ribose 1-diphosphate: step 9/9.</text>
</comment>
<comment type="similarity">
    <text evidence="1">Belongs to the histidinol dehydrogenase family.</text>
</comment>
<proteinExistence type="inferred from homology"/>
<dbReference type="EC" id="1.1.1.23" evidence="1"/>
<dbReference type="EMBL" id="BX548175">
    <property type="protein sequence ID" value="CAE21685.1"/>
    <property type="molecule type" value="Genomic_DNA"/>
</dbReference>
<dbReference type="RefSeq" id="WP_011130878.1">
    <property type="nucleotide sequence ID" value="NC_005071.1"/>
</dbReference>
<dbReference type="SMR" id="Q7V5N9"/>
<dbReference type="KEGG" id="pmt:PMT_1510"/>
<dbReference type="eggNOG" id="COG0141">
    <property type="taxonomic scope" value="Bacteria"/>
</dbReference>
<dbReference type="HOGENOM" id="CLU_006732_3_3_3"/>
<dbReference type="OrthoDB" id="9805269at2"/>
<dbReference type="UniPathway" id="UPA00031">
    <property type="reaction ID" value="UER00014"/>
</dbReference>
<dbReference type="Proteomes" id="UP000001423">
    <property type="component" value="Chromosome"/>
</dbReference>
<dbReference type="GO" id="GO:0005829">
    <property type="term" value="C:cytosol"/>
    <property type="evidence" value="ECO:0007669"/>
    <property type="project" value="TreeGrafter"/>
</dbReference>
<dbReference type="GO" id="GO:0004399">
    <property type="term" value="F:histidinol dehydrogenase activity"/>
    <property type="evidence" value="ECO:0007669"/>
    <property type="project" value="UniProtKB-UniRule"/>
</dbReference>
<dbReference type="GO" id="GO:0051287">
    <property type="term" value="F:NAD binding"/>
    <property type="evidence" value="ECO:0007669"/>
    <property type="project" value="InterPro"/>
</dbReference>
<dbReference type="GO" id="GO:0008270">
    <property type="term" value="F:zinc ion binding"/>
    <property type="evidence" value="ECO:0007669"/>
    <property type="project" value="UniProtKB-UniRule"/>
</dbReference>
<dbReference type="GO" id="GO:0000105">
    <property type="term" value="P:L-histidine biosynthetic process"/>
    <property type="evidence" value="ECO:0007669"/>
    <property type="project" value="UniProtKB-UniRule"/>
</dbReference>
<dbReference type="CDD" id="cd06572">
    <property type="entry name" value="Histidinol_dh"/>
    <property type="match status" value="1"/>
</dbReference>
<dbReference type="FunFam" id="3.40.50.1980:FF:000001">
    <property type="entry name" value="Histidinol dehydrogenase"/>
    <property type="match status" value="1"/>
</dbReference>
<dbReference type="FunFam" id="3.40.50.1980:FF:000026">
    <property type="entry name" value="Histidinol dehydrogenase"/>
    <property type="match status" value="1"/>
</dbReference>
<dbReference type="Gene3D" id="1.20.5.1300">
    <property type="match status" value="1"/>
</dbReference>
<dbReference type="Gene3D" id="3.40.50.1980">
    <property type="entry name" value="Nitrogenase molybdenum iron protein domain"/>
    <property type="match status" value="2"/>
</dbReference>
<dbReference type="HAMAP" id="MF_01024">
    <property type="entry name" value="HisD"/>
    <property type="match status" value="1"/>
</dbReference>
<dbReference type="InterPro" id="IPR016161">
    <property type="entry name" value="Ald_DH/histidinol_DH"/>
</dbReference>
<dbReference type="InterPro" id="IPR001692">
    <property type="entry name" value="Histidinol_DH_CS"/>
</dbReference>
<dbReference type="InterPro" id="IPR022695">
    <property type="entry name" value="Histidinol_DH_monofunct"/>
</dbReference>
<dbReference type="InterPro" id="IPR012131">
    <property type="entry name" value="Hstdl_DH"/>
</dbReference>
<dbReference type="NCBIfam" id="TIGR00069">
    <property type="entry name" value="hisD"/>
    <property type="match status" value="1"/>
</dbReference>
<dbReference type="PANTHER" id="PTHR21256:SF2">
    <property type="entry name" value="HISTIDINE BIOSYNTHESIS TRIFUNCTIONAL PROTEIN"/>
    <property type="match status" value="1"/>
</dbReference>
<dbReference type="PANTHER" id="PTHR21256">
    <property type="entry name" value="HISTIDINOL DEHYDROGENASE HDH"/>
    <property type="match status" value="1"/>
</dbReference>
<dbReference type="Pfam" id="PF00815">
    <property type="entry name" value="Histidinol_dh"/>
    <property type="match status" value="1"/>
</dbReference>
<dbReference type="PIRSF" id="PIRSF000099">
    <property type="entry name" value="Histidinol_dh"/>
    <property type="match status" value="1"/>
</dbReference>
<dbReference type="PRINTS" id="PR00083">
    <property type="entry name" value="HOLDHDRGNASE"/>
</dbReference>
<dbReference type="SUPFAM" id="SSF53720">
    <property type="entry name" value="ALDH-like"/>
    <property type="match status" value="1"/>
</dbReference>
<dbReference type="PROSITE" id="PS00611">
    <property type="entry name" value="HISOL_DEHYDROGENASE"/>
    <property type="match status" value="1"/>
</dbReference>
<evidence type="ECO:0000255" key="1">
    <source>
        <dbReference type="HAMAP-Rule" id="MF_01024"/>
    </source>
</evidence>